<feature type="chain" id="PRO_0000360241" description="NAD(P)H-quinone oxidoreductase subunit 6, chloroplastic">
    <location>
        <begin position="1"/>
        <end position="176"/>
    </location>
</feature>
<feature type="transmembrane region" description="Helical" evidence="2">
    <location>
        <begin position="10"/>
        <end position="30"/>
    </location>
</feature>
<feature type="transmembrane region" description="Helical" evidence="2">
    <location>
        <begin position="32"/>
        <end position="52"/>
    </location>
</feature>
<feature type="transmembrane region" description="Helical" evidence="2">
    <location>
        <begin position="63"/>
        <end position="83"/>
    </location>
</feature>
<feature type="transmembrane region" description="Helical" evidence="2">
    <location>
        <begin position="92"/>
        <end position="112"/>
    </location>
</feature>
<feature type="transmembrane region" description="Helical" evidence="2">
    <location>
        <begin position="152"/>
        <end position="172"/>
    </location>
</feature>
<reference key="1">
    <citation type="journal article" date="2008" name="Mol. Phylogenet. Evol.">
        <title>Complete plastid genome sequence of the chickpea (Cicer arietinum) and the phylogenetic distribution of rps12 and clpP intron losses among legumes (Leguminosae).</title>
        <authorList>
            <person name="Jansen R.K."/>
            <person name="Wojciechowski M.F."/>
            <person name="Sanniyasi E."/>
            <person name="Lee S.-B."/>
            <person name="Daniell H."/>
        </authorList>
    </citation>
    <scope>NUCLEOTIDE SEQUENCE [LARGE SCALE GENOMIC DNA]</scope>
</reference>
<evidence type="ECO:0000250" key="1"/>
<evidence type="ECO:0000255" key="2"/>
<evidence type="ECO:0000305" key="3"/>
<sequence length="176" mass="19379">MALPETLHDFLLVFLGSGLILGSLGVVLLTNPIFSAFSLGLVLVCISLFYILSNSHFVAASQLLIYVGAINILIIFAVMFMNSSEYYQDFNLWTVGDGITLIVCTSIFVSLVTTIPDTSWYGIIWTTRPNQIIEQDLISTSQQIGIHLSTDFFLPFELISIILLVALIGTIVVARQ</sequence>
<accession>B5LMS3</accession>
<comment type="function">
    <text evidence="1">NDH shuttles electrons from NAD(P)H:plastoquinone, via FMN and iron-sulfur (Fe-S) centers, to quinones in the photosynthetic chain and possibly in a chloroplast respiratory chain. The immediate electron acceptor for the enzyme in this species is believed to be plastoquinone. Couples the redox reaction to proton translocation, and thus conserves the redox energy in a proton gradient (By similarity).</text>
</comment>
<comment type="catalytic activity">
    <reaction>
        <text>a plastoquinone + NADH + (n+1) H(+)(in) = a plastoquinol + NAD(+) + n H(+)(out)</text>
        <dbReference type="Rhea" id="RHEA:42608"/>
        <dbReference type="Rhea" id="RHEA-COMP:9561"/>
        <dbReference type="Rhea" id="RHEA-COMP:9562"/>
        <dbReference type="ChEBI" id="CHEBI:15378"/>
        <dbReference type="ChEBI" id="CHEBI:17757"/>
        <dbReference type="ChEBI" id="CHEBI:57540"/>
        <dbReference type="ChEBI" id="CHEBI:57945"/>
        <dbReference type="ChEBI" id="CHEBI:62192"/>
    </reaction>
</comment>
<comment type="catalytic activity">
    <reaction>
        <text>a plastoquinone + NADPH + (n+1) H(+)(in) = a plastoquinol + NADP(+) + n H(+)(out)</text>
        <dbReference type="Rhea" id="RHEA:42612"/>
        <dbReference type="Rhea" id="RHEA-COMP:9561"/>
        <dbReference type="Rhea" id="RHEA-COMP:9562"/>
        <dbReference type="ChEBI" id="CHEBI:15378"/>
        <dbReference type="ChEBI" id="CHEBI:17757"/>
        <dbReference type="ChEBI" id="CHEBI:57783"/>
        <dbReference type="ChEBI" id="CHEBI:58349"/>
        <dbReference type="ChEBI" id="CHEBI:62192"/>
    </reaction>
</comment>
<comment type="subunit">
    <text evidence="1">NDH is composed of at least 16 different subunits, 5 of which are encoded in the nucleus.</text>
</comment>
<comment type="subcellular location">
    <subcellularLocation>
        <location evidence="1">Plastid</location>
        <location evidence="1">Chloroplast thylakoid membrane</location>
        <topology evidence="1">Multi-pass membrane protein</topology>
    </subcellularLocation>
</comment>
<comment type="similarity">
    <text evidence="3">Belongs to the complex I subunit 6 family.</text>
</comment>
<keyword id="KW-0150">Chloroplast</keyword>
<keyword id="KW-0472">Membrane</keyword>
<keyword id="KW-0520">NAD</keyword>
<keyword id="KW-0521">NADP</keyword>
<keyword id="KW-0934">Plastid</keyword>
<keyword id="KW-0618">Plastoquinone</keyword>
<keyword id="KW-0874">Quinone</keyword>
<keyword id="KW-1185">Reference proteome</keyword>
<keyword id="KW-0793">Thylakoid</keyword>
<keyword id="KW-1278">Translocase</keyword>
<keyword id="KW-0812">Transmembrane</keyword>
<keyword id="KW-1133">Transmembrane helix</keyword>
<keyword id="KW-0813">Transport</keyword>
<name>NU6C_CICAR</name>
<gene>
    <name type="primary">ndhG</name>
</gene>
<protein>
    <recommendedName>
        <fullName>NAD(P)H-quinone oxidoreductase subunit 6, chloroplastic</fullName>
        <ecNumber>7.1.1.-</ecNumber>
    </recommendedName>
    <alternativeName>
        <fullName>NAD(P)H dehydrogenase subunit 6</fullName>
    </alternativeName>
    <alternativeName>
        <fullName>NADH-plastoquinone oxidoreductase subunit 6</fullName>
    </alternativeName>
</protein>
<dbReference type="EC" id="7.1.1.-"/>
<dbReference type="EMBL" id="EU835853">
    <property type="protein sequence ID" value="ACH41120.1"/>
    <property type="molecule type" value="Genomic_DNA"/>
</dbReference>
<dbReference type="RefSeq" id="YP_002149782.1">
    <property type="nucleotide sequence ID" value="NC_011163.1"/>
</dbReference>
<dbReference type="SMR" id="B5LMS3"/>
<dbReference type="GeneID" id="6797540"/>
<dbReference type="KEGG" id="cam:6797540"/>
<dbReference type="OrthoDB" id="1418200at2759"/>
<dbReference type="Proteomes" id="UP000087171">
    <property type="component" value="Chloroplast Pltd"/>
</dbReference>
<dbReference type="GO" id="GO:0009535">
    <property type="term" value="C:chloroplast thylakoid membrane"/>
    <property type="evidence" value="ECO:0007669"/>
    <property type="project" value="UniProtKB-SubCell"/>
</dbReference>
<dbReference type="GO" id="GO:0008137">
    <property type="term" value="F:NADH dehydrogenase (ubiquinone) activity"/>
    <property type="evidence" value="ECO:0007669"/>
    <property type="project" value="InterPro"/>
</dbReference>
<dbReference type="GO" id="GO:0048038">
    <property type="term" value="F:quinone binding"/>
    <property type="evidence" value="ECO:0007669"/>
    <property type="project" value="UniProtKB-KW"/>
</dbReference>
<dbReference type="FunFam" id="1.20.120.1200:FF:000002">
    <property type="entry name" value="NAD(P)H-quinone oxidoreductase subunit 6, chloroplastic"/>
    <property type="match status" value="1"/>
</dbReference>
<dbReference type="Gene3D" id="1.20.120.1200">
    <property type="entry name" value="NADH-ubiquinone/plastoquinone oxidoreductase chain 6, subunit NuoJ"/>
    <property type="match status" value="1"/>
</dbReference>
<dbReference type="InterPro" id="IPR050290">
    <property type="entry name" value="NAD(P)H-Q_Oxidoreduct_6"/>
</dbReference>
<dbReference type="InterPro" id="IPR001457">
    <property type="entry name" value="NADH_UbQ/plastoQ_OxRdtase_su6"/>
</dbReference>
<dbReference type="InterPro" id="IPR042106">
    <property type="entry name" value="Nuo/plastoQ_OxRdtase_6_NuoJ"/>
</dbReference>
<dbReference type="PANTHER" id="PTHR48479">
    <property type="entry name" value="NAD(P)H-QUINONE OXIDOREDUCTASE SUBUNIT 6, CHLOROPLASTIC"/>
    <property type="match status" value="1"/>
</dbReference>
<dbReference type="PANTHER" id="PTHR48479:SF1">
    <property type="entry name" value="NAD(P)H-QUINONE OXIDOREDUCTASE SUBUNIT 6, CHLOROPLASTIC"/>
    <property type="match status" value="1"/>
</dbReference>
<dbReference type="Pfam" id="PF00499">
    <property type="entry name" value="Oxidored_q3"/>
    <property type="match status" value="1"/>
</dbReference>
<geneLocation type="chloroplast"/>
<organism>
    <name type="scientific">Cicer arietinum</name>
    <name type="common">Chickpea</name>
    <name type="synonym">Garbanzo</name>
    <dbReference type="NCBI Taxonomy" id="3827"/>
    <lineage>
        <taxon>Eukaryota</taxon>
        <taxon>Viridiplantae</taxon>
        <taxon>Streptophyta</taxon>
        <taxon>Embryophyta</taxon>
        <taxon>Tracheophyta</taxon>
        <taxon>Spermatophyta</taxon>
        <taxon>Magnoliopsida</taxon>
        <taxon>eudicotyledons</taxon>
        <taxon>Gunneridae</taxon>
        <taxon>Pentapetalae</taxon>
        <taxon>rosids</taxon>
        <taxon>fabids</taxon>
        <taxon>Fabales</taxon>
        <taxon>Fabaceae</taxon>
        <taxon>Papilionoideae</taxon>
        <taxon>50 kb inversion clade</taxon>
        <taxon>NPAAA clade</taxon>
        <taxon>Hologalegina</taxon>
        <taxon>IRL clade</taxon>
        <taxon>Cicereae</taxon>
        <taxon>Cicer</taxon>
    </lineage>
</organism>
<proteinExistence type="inferred from homology"/>